<reference key="1">
    <citation type="journal article" date="2010" name="Genome Biol.">
        <title>Structure and dynamics of the pan-genome of Streptococcus pneumoniae and closely related species.</title>
        <authorList>
            <person name="Donati C."/>
            <person name="Hiller N.L."/>
            <person name="Tettelin H."/>
            <person name="Muzzi A."/>
            <person name="Croucher N.J."/>
            <person name="Angiuoli S.V."/>
            <person name="Oggioni M."/>
            <person name="Dunning Hotopp J.C."/>
            <person name="Hu F.Z."/>
            <person name="Riley D.R."/>
            <person name="Covacci A."/>
            <person name="Mitchell T.J."/>
            <person name="Bentley S.D."/>
            <person name="Kilian M."/>
            <person name="Ehrlich G.D."/>
            <person name="Rappuoli R."/>
            <person name="Moxon E.R."/>
            <person name="Masignani V."/>
        </authorList>
    </citation>
    <scope>NUCLEOTIDE SEQUENCE [LARGE SCALE GENOMIC DNA]</scope>
    <source>
        <strain>JJA</strain>
    </source>
</reference>
<dbReference type="EC" id="6.3.4.19" evidence="1"/>
<dbReference type="EMBL" id="CP000919">
    <property type="protein sequence ID" value="ACO19917.1"/>
    <property type="molecule type" value="Genomic_DNA"/>
</dbReference>
<dbReference type="RefSeq" id="WP_001208991.1">
    <property type="nucleotide sequence ID" value="NC_012466.1"/>
</dbReference>
<dbReference type="SMR" id="C1CH91"/>
<dbReference type="KEGG" id="sjj:SPJ_0011"/>
<dbReference type="HOGENOM" id="CLU_018869_0_2_9"/>
<dbReference type="Proteomes" id="UP000002206">
    <property type="component" value="Chromosome"/>
</dbReference>
<dbReference type="GO" id="GO:0005737">
    <property type="term" value="C:cytoplasm"/>
    <property type="evidence" value="ECO:0007669"/>
    <property type="project" value="UniProtKB-SubCell"/>
</dbReference>
<dbReference type="GO" id="GO:0005524">
    <property type="term" value="F:ATP binding"/>
    <property type="evidence" value="ECO:0007669"/>
    <property type="project" value="UniProtKB-UniRule"/>
</dbReference>
<dbReference type="GO" id="GO:0032267">
    <property type="term" value="F:tRNA(Ile)-lysidine synthase activity"/>
    <property type="evidence" value="ECO:0007669"/>
    <property type="project" value="UniProtKB-EC"/>
</dbReference>
<dbReference type="GO" id="GO:0006400">
    <property type="term" value="P:tRNA modification"/>
    <property type="evidence" value="ECO:0007669"/>
    <property type="project" value="UniProtKB-UniRule"/>
</dbReference>
<dbReference type="CDD" id="cd01992">
    <property type="entry name" value="TilS_N"/>
    <property type="match status" value="1"/>
</dbReference>
<dbReference type="Gene3D" id="3.40.50.620">
    <property type="entry name" value="HUPs"/>
    <property type="match status" value="1"/>
</dbReference>
<dbReference type="HAMAP" id="MF_01161">
    <property type="entry name" value="tRNA_Ile_lys_synt"/>
    <property type="match status" value="1"/>
</dbReference>
<dbReference type="InterPro" id="IPR012796">
    <property type="entry name" value="Lysidine-tRNA-synth_C"/>
</dbReference>
<dbReference type="InterPro" id="IPR014729">
    <property type="entry name" value="Rossmann-like_a/b/a_fold"/>
</dbReference>
<dbReference type="InterPro" id="IPR011063">
    <property type="entry name" value="TilS/TtcA_N"/>
</dbReference>
<dbReference type="InterPro" id="IPR012094">
    <property type="entry name" value="tRNA_Ile_lys_synt"/>
</dbReference>
<dbReference type="InterPro" id="IPR012795">
    <property type="entry name" value="tRNA_Ile_lys_synt_N"/>
</dbReference>
<dbReference type="NCBIfam" id="TIGR02433">
    <property type="entry name" value="lysidine_TilS_C"/>
    <property type="match status" value="1"/>
</dbReference>
<dbReference type="NCBIfam" id="TIGR02432">
    <property type="entry name" value="lysidine_TilS_N"/>
    <property type="match status" value="1"/>
</dbReference>
<dbReference type="PANTHER" id="PTHR43033">
    <property type="entry name" value="TRNA(ILE)-LYSIDINE SYNTHASE-RELATED"/>
    <property type="match status" value="1"/>
</dbReference>
<dbReference type="PANTHER" id="PTHR43033:SF1">
    <property type="entry name" value="TRNA(ILE)-LYSIDINE SYNTHASE-RELATED"/>
    <property type="match status" value="1"/>
</dbReference>
<dbReference type="Pfam" id="PF01171">
    <property type="entry name" value="ATP_bind_3"/>
    <property type="match status" value="1"/>
</dbReference>
<dbReference type="Pfam" id="PF11734">
    <property type="entry name" value="TilS_C"/>
    <property type="match status" value="1"/>
</dbReference>
<dbReference type="SMART" id="SM00977">
    <property type="entry name" value="TilS_C"/>
    <property type="match status" value="1"/>
</dbReference>
<dbReference type="SUPFAM" id="SSF52402">
    <property type="entry name" value="Adenine nucleotide alpha hydrolases-like"/>
    <property type="match status" value="1"/>
</dbReference>
<dbReference type="SUPFAM" id="SSF56037">
    <property type="entry name" value="PheT/TilS domain"/>
    <property type="match status" value="1"/>
</dbReference>
<comment type="function">
    <text evidence="1">Ligates lysine onto the cytidine present at position 34 of the AUA codon-specific tRNA(Ile) that contains the anticodon CAU, in an ATP-dependent manner. Cytidine is converted to lysidine, thus changing the amino acid specificity of the tRNA from methionine to isoleucine.</text>
</comment>
<comment type="catalytic activity">
    <reaction evidence="1">
        <text>cytidine(34) in tRNA(Ile2) + L-lysine + ATP = lysidine(34) in tRNA(Ile2) + AMP + diphosphate + H(+)</text>
        <dbReference type="Rhea" id="RHEA:43744"/>
        <dbReference type="Rhea" id="RHEA-COMP:10625"/>
        <dbReference type="Rhea" id="RHEA-COMP:10670"/>
        <dbReference type="ChEBI" id="CHEBI:15378"/>
        <dbReference type="ChEBI" id="CHEBI:30616"/>
        <dbReference type="ChEBI" id="CHEBI:32551"/>
        <dbReference type="ChEBI" id="CHEBI:33019"/>
        <dbReference type="ChEBI" id="CHEBI:82748"/>
        <dbReference type="ChEBI" id="CHEBI:83665"/>
        <dbReference type="ChEBI" id="CHEBI:456215"/>
        <dbReference type="EC" id="6.3.4.19"/>
    </reaction>
</comment>
<comment type="subcellular location">
    <subcellularLocation>
        <location evidence="1">Cytoplasm</location>
    </subcellularLocation>
</comment>
<comment type="domain">
    <text>The N-terminal region contains the highly conserved SGGXDS motif, predicted to be a P-loop motif involved in ATP binding.</text>
</comment>
<comment type="similarity">
    <text evidence="1">Belongs to the tRNA(Ile)-lysidine synthase family.</text>
</comment>
<gene>
    <name evidence="1" type="primary">tilS</name>
    <name type="ordered locus">SPJ_0011</name>
</gene>
<keyword id="KW-0067">ATP-binding</keyword>
<keyword id="KW-0963">Cytoplasm</keyword>
<keyword id="KW-0436">Ligase</keyword>
<keyword id="KW-0547">Nucleotide-binding</keyword>
<keyword id="KW-0819">tRNA processing</keyword>
<proteinExistence type="inferred from homology"/>
<sequence length="425" mass="49872">MREPDFLNHFLKKGYFKKHAKAVLALSGGLDSMFLFKVLSTYQKELEIELILAHVNHKQRIESDWEEKELRKLAAEAELPIYISNFSGEFSEARARNFRYDFFQEVMKKTGATALVTAHHADDQVETILMRLIRGTRLRYLSGIKEKQVVGEIEIIRPFLHFQKKDFPSIFHFEDTSNQENHYFRNRIRNSYLPELEKENPRFRDAILGIGNEILDYDLAIAELSNNINVENLQQLFSYSESTQRVLLQTYLNRFPDLNLTKAQFAEVQQILKSKSQYRHPIKNGYELIKEYQQFQICKISPQADEEEDELVLHYQNQVAYQGYLFSFGLPLEGELIQQIPVSRETSIHIRHRKTGDVLIQNGHRKKLRRLFIDLKIPMEKRNSALIIEQFGEIVSILGIATNNLSKKTKNDIMNTVLYIEKIDR</sequence>
<evidence type="ECO:0000255" key="1">
    <source>
        <dbReference type="HAMAP-Rule" id="MF_01161"/>
    </source>
</evidence>
<protein>
    <recommendedName>
        <fullName evidence="1">tRNA(Ile)-lysidine synthase</fullName>
        <ecNumber evidence="1">6.3.4.19</ecNumber>
    </recommendedName>
    <alternativeName>
        <fullName evidence="1">tRNA(Ile)-2-lysyl-cytidine synthase</fullName>
    </alternativeName>
    <alternativeName>
        <fullName evidence="1">tRNA(Ile)-lysidine synthetase</fullName>
    </alternativeName>
</protein>
<accession>C1CH91</accession>
<organism>
    <name type="scientific">Streptococcus pneumoniae (strain JJA)</name>
    <dbReference type="NCBI Taxonomy" id="488222"/>
    <lineage>
        <taxon>Bacteria</taxon>
        <taxon>Bacillati</taxon>
        <taxon>Bacillota</taxon>
        <taxon>Bacilli</taxon>
        <taxon>Lactobacillales</taxon>
        <taxon>Streptococcaceae</taxon>
        <taxon>Streptococcus</taxon>
    </lineage>
</organism>
<name>TILS_STRZJ</name>
<feature type="chain" id="PRO_1000164336" description="tRNA(Ile)-lysidine synthase">
    <location>
        <begin position="1"/>
        <end position="425"/>
    </location>
</feature>
<feature type="binding site" evidence="1">
    <location>
        <begin position="27"/>
        <end position="32"/>
    </location>
    <ligand>
        <name>ATP</name>
        <dbReference type="ChEBI" id="CHEBI:30616"/>
    </ligand>
</feature>